<keyword id="KW-0004">4Fe-4S</keyword>
<keyword id="KW-0150">Chloroplast</keyword>
<keyword id="KW-0408">Iron</keyword>
<keyword id="KW-0411">Iron-sulfur</keyword>
<keyword id="KW-0472">Membrane</keyword>
<keyword id="KW-0479">Metal-binding</keyword>
<keyword id="KW-0520">NAD</keyword>
<keyword id="KW-0521">NADP</keyword>
<keyword id="KW-0934">Plastid</keyword>
<keyword id="KW-0618">Plastoquinone</keyword>
<keyword id="KW-0874">Quinone</keyword>
<keyword id="KW-0677">Repeat</keyword>
<keyword id="KW-0793">Thylakoid</keyword>
<keyword id="KW-1278">Translocase</keyword>
<sequence>MFPMVTEFMNYGQQTVRAARYIGQGFMITLSHANRLPVTIQYPYEKLITSERFRGRIHFEFDKCIACEVCVRVCPIDLPVVDWKLETDIRKKRLLNYSIDFGICIFCGNCVEYCPTNCLSMTEEYELSTYDRHELNYNQIALGRLPMSIIDDYTIRTIFNLPEIKT</sequence>
<proteinExistence type="inferred from homology"/>
<geneLocation type="chloroplast"/>
<feature type="chain" id="PRO_0000250805" description="NAD(P)H-quinone oxidoreductase subunit I, chloroplastic">
    <location>
        <begin position="1"/>
        <end position="166"/>
    </location>
</feature>
<feature type="domain" description="4Fe-4S ferredoxin-type 1" evidence="1">
    <location>
        <begin position="55"/>
        <end position="84"/>
    </location>
</feature>
<feature type="domain" description="4Fe-4S ferredoxin-type 2" evidence="1">
    <location>
        <begin position="95"/>
        <end position="124"/>
    </location>
</feature>
<feature type="binding site" evidence="1">
    <location>
        <position position="64"/>
    </location>
    <ligand>
        <name>[4Fe-4S] cluster</name>
        <dbReference type="ChEBI" id="CHEBI:49883"/>
        <label>1</label>
    </ligand>
</feature>
<feature type="binding site" evidence="1">
    <location>
        <position position="67"/>
    </location>
    <ligand>
        <name>[4Fe-4S] cluster</name>
        <dbReference type="ChEBI" id="CHEBI:49883"/>
        <label>1</label>
    </ligand>
</feature>
<feature type="binding site" evidence="1">
    <location>
        <position position="70"/>
    </location>
    <ligand>
        <name>[4Fe-4S] cluster</name>
        <dbReference type="ChEBI" id="CHEBI:49883"/>
        <label>1</label>
    </ligand>
</feature>
<feature type="binding site" evidence="1">
    <location>
        <position position="74"/>
    </location>
    <ligand>
        <name>[4Fe-4S] cluster</name>
        <dbReference type="ChEBI" id="CHEBI:49883"/>
        <label>2</label>
    </ligand>
</feature>
<feature type="binding site" evidence="1">
    <location>
        <position position="104"/>
    </location>
    <ligand>
        <name>[4Fe-4S] cluster</name>
        <dbReference type="ChEBI" id="CHEBI:49883"/>
        <label>2</label>
    </ligand>
</feature>
<feature type="binding site" evidence="1">
    <location>
        <position position="107"/>
    </location>
    <ligand>
        <name>[4Fe-4S] cluster</name>
        <dbReference type="ChEBI" id="CHEBI:49883"/>
        <label>2</label>
    </ligand>
</feature>
<feature type="binding site" evidence="1">
    <location>
        <position position="110"/>
    </location>
    <ligand>
        <name>[4Fe-4S] cluster</name>
        <dbReference type="ChEBI" id="CHEBI:49883"/>
        <label>2</label>
    </ligand>
</feature>
<feature type="binding site" evidence="1">
    <location>
        <position position="114"/>
    </location>
    <ligand>
        <name>[4Fe-4S] cluster</name>
        <dbReference type="ChEBI" id="CHEBI:49883"/>
        <label>1</label>
    </ligand>
</feature>
<evidence type="ECO:0000255" key="1">
    <source>
        <dbReference type="HAMAP-Rule" id="MF_01351"/>
    </source>
</evidence>
<organism>
    <name type="scientific">Jaumea carnosa</name>
    <name type="common">Marsh jaumea</name>
    <name type="synonym">Coinogyne carnosa</name>
    <dbReference type="NCBI Taxonomy" id="41592"/>
    <lineage>
        <taxon>Eukaryota</taxon>
        <taxon>Viridiplantae</taxon>
        <taxon>Streptophyta</taxon>
        <taxon>Embryophyta</taxon>
        <taxon>Tracheophyta</taxon>
        <taxon>Spermatophyta</taxon>
        <taxon>Magnoliopsida</taxon>
        <taxon>eudicotyledons</taxon>
        <taxon>Gunneridae</taxon>
        <taxon>Pentapetalae</taxon>
        <taxon>asterids</taxon>
        <taxon>campanulids</taxon>
        <taxon>Asterales</taxon>
        <taxon>Asteraceae</taxon>
        <taxon>Asteroideae</taxon>
        <taxon>Heliantheae alliance</taxon>
        <taxon>Tageteae</taxon>
        <taxon>Jaumea</taxon>
    </lineage>
</organism>
<reference key="1">
    <citation type="submission" date="2003-01" db="EMBL/GenBank/DDBJ databases">
        <title>Chloroplast DNA phylogeny of tribe Heliantheae (Asteraceae).</title>
        <authorList>
            <person name="Panero J.L."/>
            <person name="Baldwin B.G."/>
            <person name="Schilling E.E."/>
            <person name="Clevinger J.A."/>
        </authorList>
    </citation>
    <scope>NUCLEOTIDE SEQUENCE [GENOMIC DNA]</scope>
</reference>
<protein>
    <recommendedName>
        <fullName evidence="1">NAD(P)H-quinone oxidoreductase subunit I, chloroplastic</fullName>
        <ecNumber evidence="1">7.1.1.-</ecNumber>
    </recommendedName>
    <alternativeName>
        <fullName evidence="1">NAD(P)H dehydrogenase subunit I</fullName>
        <shortName evidence="1">NDH subunit I</shortName>
    </alternativeName>
    <alternativeName>
        <fullName evidence="1">NADH-plastoquinone oxidoreductase subunit I</fullName>
    </alternativeName>
</protein>
<gene>
    <name evidence="1" type="primary">ndhI</name>
</gene>
<comment type="function">
    <text evidence="1">NDH shuttles electrons from NAD(P)H:plastoquinone, via FMN and iron-sulfur (Fe-S) centers, to quinones in the photosynthetic chain and possibly in a chloroplast respiratory chain. The immediate electron acceptor for the enzyme in this species is believed to be plastoquinone. Couples the redox reaction to proton translocation, and thus conserves the redox energy in a proton gradient.</text>
</comment>
<comment type="catalytic activity">
    <reaction evidence="1">
        <text>a plastoquinone + NADH + (n+1) H(+)(in) = a plastoquinol + NAD(+) + n H(+)(out)</text>
        <dbReference type="Rhea" id="RHEA:42608"/>
        <dbReference type="Rhea" id="RHEA-COMP:9561"/>
        <dbReference type="Rhea" id="RHEA-COMP:9562"/>
        <dbReference type="ChEBI" id="CHEBI:15378"/>
        <dbReference type="ChEBI" id="CHEBI:17757"/>
        <dbReference type="ChEBI" id="CHEBI:57540"/>
        <dbReference type="ChEBI" id="CHEBI:57945"/>
        <dbReference type="ChEBI" id="CHEBI:62192"/>
    </reaction>
</comment>
<comment type="catalytic activity">
    <reaction evidence="1">
        <text>a plastoquinone + NADPH + (n+1) H(+)(in) = a plastoquinol + NADP(+) + n H(+)(out)</text>
        <dbReference type="Rhea" id="RHEA:42612"/>
        <dbReference type="Rhea" id="RHEA-COMP:9561"/>
        <dbReference type="Rhea" id="RHEA-COMP:9562"/>
        <dbReference type="ChEBI" id="CHEBI:15378"/>
        <dbReference type="ChEBI" id="CHEBI:17757"/>
        <dbReference type="ChEBI" id="CHEBI:57783"/>
        <dbReference type="ChEBI" id="CHEBI:58349"/>
        <dbReference type="ChEBI" id="CHEBI:62192"/>
    </reaction>
</comment>
<comment type="cofactor">
    <cofactor evidence="1">
        <name>[4Fe-4S] cluster</name>
        <dbReference type="ChEBI" id="CHEBI:49883"/>
    </cofactor>
    <text evidence="1">Binds 2 [4Fe-4S] clusters per subunit.</text>
</comment>
<comment type="subunit">
    <text evidence="1">NDH is composed of at least 16 different subunits, 5 of which are encoded in the nucleus.</text>
</comment>
<comment type="subcellular location">
    <subcellularLocation>
        <location evidence="1">Plastid</location>
        <location evidence="1">Chloroplast thylakoid membrane</location>
        <topology evidence="1">Peripheral membrane protein</topology>
    </subcellularLocation>
</comment>
<comment type="similarity">
    <text evidence="1">Belongs to the complex I 23 kDa subunit family.</text>
</comment>
<accession>Q8HVQ8</accession>
<dbReference type="EC" id="7.1.1.-" evidence="1"/>
<dbReference type="EMBL" id="AF383805">
    <property type="protein sequence ID" value="AAN61746.1"/>
    <property type="molecule type" value="Genomic_DNA"/>
</dbReference>
<dbReference type="SMR" id="Q8HVQ8"/>
<dbReference type="GO" id="GO:0009535">
    <property type="term" value="C:chloroplast thylakoid membrane"/>
    <property type="evidence" value="ECO:0007669"/>
    <property type="project" value="UniProtKB-SubCell"/>
</dbReference>
<dbReference type="GO" id="GO:0051539">
    <property type="term" value="F:4 iron, 4 sulfur cluster binding"/>
    <property type="evidence" value="ECO:0007669"/>
    <property type="project" value="UniProtKB-KW"/>
</dbReference>
<dbReference type="GO" id="GO:0005506">
    <property type="term" value="F:iron ion binding"/>
    <property type="evidence" value="ECO:0007669"/>
    <property type="project" value="UniProtKB-UniRule"/>
</dbReference>
<dbReference type="GO" id="GO:0008137">
    <property type="term" value="F:NADH dehydrogenase (ubiquinone) activity"/>
    <property type="evidence" value="ECO:0007669"/>
    <property type="project" value="InterPro"/>
</dbReference>
<dbReference type="GO" id="GO:0048038">
    <property type="term" value="F:quinone binding"/>
    <property type="evidence" value="ECO:0007669"/>
    <property type="project" value="UniProtKB-KW"/>
</dbReference>
<dbReference type="GO" id="GO:0019684">
    <property type="term" value="P:photosynthesis, light reaction"/>
    <property type="evidence" value="ECO:0007669"/>
    <property type="project" value="UniProtKB-UniRule"/>
</dbReference>
<dbReference type="FunFam" id="3.30.70.3270:FF:000006">
    <property type="entry name" value="NAD(P)H-quinone oxidoreductase subunit I, chloroplastic"/>
    <property type="match status" value="1"/>
</dbReference>
<dbReference type="Gene3D" id="3.30.70.3270">
    <property type="match status" value="1"/>
</dbReference>
<dbReference type="HAMAP" id="MF_01351">
    <property type="entry name" value="NDH1_NuoI"/>
    <property type="match status" value="1"/>
</dbReference>
<dbReference type="InterPro" id="IPR017896">
    <property type="entry name" value="4Fe4S_Fe-S-bd"/>
</dbReference>
<dbReference type="InterPro" id="IPR017900">
    <property type="entry name" value="4Fe4S_Fe_S_CS"/>
</dbReference>
<dbReference type="InterPro" id="IPR010226">
    <property type="entry name" value="NADH_quinone_OxRdtase_chainI"/>
</dbReference>
<dbReference type="InterPro" id="IPR004497">
    <property type="entry name" value="NDHI"/>
</dbReference>
<dbReference type="NCBIfam" id="TIGR00403">
    <property type="entry name" value="ndhI"/>
    <property type="match status" value="1"/>
</dbReference>
<dbReference type="NCBIfam" id="TIGR01971">
    <property type="entry name" value="NuoI"/>
    <property type="match status" value="1"/>
</dbReference>
<dbReference type="NCBIfam" id="NF004537">
    <property type="entry name" value="PRK05888.1-3"/>
    <property type="match status" value="1"/>
</dbReference>
<dbReference type="PANTHER" id="PTHR47275">
    <property type="entry name" value="NAD(P)H-QUINONE OXIDOREDUCTASE SUBUNIT I, CHLOROPLASTIC"/>
    <property type="match status" value="1"/>
</dbReference>
<dbReference type="PANTHER" id="PTHR47275:SF1">
    <property type="entry name" value="NAD(P)H-QUINONE OXIDOREDUCTASE SUBUNIT I, CHLOROPLASTIC"/>
    <property type="match status" value="1"/>
</dbReference>
<dbReference type="Pfam" id="PF00037">
    <property type="entry name" value="Fer4"/>
    <property type="match status" value="2"/>
</dbReference>
<dbReference type="SUPFAM" id="SSF54862">
    <property type="entry name" value="4Fe-4S ferredoxins"/>
    <property type="match status" value="1"/>
</dbReference>
<dbReference type="PROSITE" id="PS00198">
    <property type="entry name" value="4FE4S_FER_1"/>
    <property type="match status" value="2"/>
</dbReference>
<dbReference type="PROSITE" id="PS51379">
    <property type="entry name" value="4FE4S_FER_2"/>
    <property type="match status" value="2"/>
</dbReference>
<name>NDHI_JAUCA</name>